<gene>
    <name evidence="1" type="primary">bioW</name>
    <name type="ordered locus">MmarC6_1095</name>
</gene>
<organism>
    <name type="scientific">Methanococcus maripaludis (strain C6 / ATCC BAA-1332)</name>
    <dbReference type="NCBI Taxonomy" id="444158"/>
    <lineage>
        <taxon>Archaea</taxon>
        <taxon>Methanobacteriati</taxon>
        <taxon>Methanobacteriota</taxon>
        <taxon>Methanomada group</taxon>
        <taxon>Methanococci</taxon>
        <taxon>Methanococcales</taxon>
        <taxon>Methanococcaceae</taxon>
        <taxon>Methanococcus</taxon>
    </lineage>
</organism>
<feature type="chain" id="PRO_0000412100" description="6-carboxyhexanoate--CoA ligase">
    <location>
        <begin position="1"/>
        <end position="244"/>
    </location>
</feature>
<dbReference type="EC" id="6.2.1.14" evidence="1"/>
<dbReference type="EMBL" id="CP000867">
    <property type="protein sequence ID" value="ABX01909.1"/>
    <property type="molecule type" value="Genomic_DNA"/>
</dbReference>
<dbReference type="SMR" id="A9A986"/>
<dbReference type="STRING" id="444158.MmarC6_1095"/>
<dbReference type="KEGG" id="mmx:MmarC6_1095"/>
<dbReference type="eggNOG" id="arCOG05075">
    <property type="taxonomic scope" value="Archaea"/>
</dbReference>
<dbReference type="HOGENOM" id="CLU_076858_0_0_2"/>
<dbReference type="OrthoDB" id="65815at2157"/>
<dbReference type="PhylomeDB" id="A9A986"/>
<dbReference type="UniPathway" id="UPA00999">
    <property type="reaction ID" value="UER00351"/>
</dbReference>
<dbReference type="GO" id="GO:0042410">
    <property type="term" value="F:6-carboxyhexanoate-CoA ligase activity"/>
    <property type="evidence" value="ECO:0007669"/>
    <property type="project" value="UniProtKB-UniRule"/>
</dbReference>
<dbReference type="GO" id="GO:0005524">
    <property type="term" value="F:ATP binding"/>
    <property type="evidence" value="ECO:0007669"/>
    <property type="project" value="UniProtKB-KW"/>
</dbReference>
<dbReference type="GO" id="GO:0000287">
    <property type="term" value="F:magnesium ion binding"/>
    <property type="evidence" value="ECO:0007669"/>
    <property type="project" value="UniProtKB-UniRule"/>
</dbReference>
<dbReference type="GO" id="GO:0009102">
    <property type="term" value="P:biotin biosynthetic process"/>
    <property type="evidence" value="ECO:0007669"/>
    <property type="project" value="UniProtKB-UniRule"/>
</dbReference>
<dbReference type="HAMAP" id="MF_00668">
    <property type="entry name" value="BioW"/>
    <property type="match status" value="1"/>
</dbReference>
<dbReference type="InterPro" id="IPR005499">
    <property type="entry name" value="BioW"/>
</dbReference>
<dbReference type="NCBIfam" id="NF002360">
    <property type="entry name" value="PRK01322.1"/>
    <property type="match status" value="1"/>
</dbReference>
<dbReference type="Pfam" id="PF03744">
    <property type="entry name" value="BioW"/>
    <property type="match status" value="1"/>
</dbReference>
<protein>
    <recommendedName>
        <fullName evidence="1">6-carboxyhexanoate--CoA ligase</fullName>
        <ecNumber evidence="1">6.2.1.14</ecNumber>
    </recommendedName>
    <alternativeName>
        <fullName evidence="1">Pimeloyl-CoA synthase</fullName>
    </alternativeName>
</protein>
<reference key="1">
    <citation type="submission" date="2007-10" db="EMBL/GenBank/DDBJ databases">
        <title>Complete sequence of Methanococcus maripaludis C6.</title>
        <authorList>
            <consortium name="US DOE Joint Genome Institute"/>
            <person name="Copeland A."/>
            <person name="Lucas S."/>
            <person name="Lapidus A."/>
            <person name="Barry K."/>
            <person name="Glavina del Rio T."/>
            <person name="Dalin E."/>
            <person name="Tice H."/>
            <person name="Pitluck S."/>
            <person name="Clum A."/>
            <person name="Schmutz J."/>
            <person name="Larimer F."/>
            <person name="Land M."/>
            <person name="Hauser L."/>
            <person name="Kyrpides N."/>
            <person name="Mikhailova N."/>
            <person name="Sieprawska-Lupa M."/>
            <person name="Whitman W.B."/>
            <person name="Richardson P."/>
        </authorList>
    </citation>
    <scope>NUCLEOTIDE SEQUENCE [LARGE SCALE GENOMIC DNA]</scope>
    <source>
        <strain>C6 / ATCC BAA-1332</strain>
    </source>
</reference>
<evidence type="ECO:0000255" key="1">
    <source>
        <dbReference type="HAMAP-Rule" id="MF_00668"/>
    </source>
</evidence>
<keyword id="KW-0067">ATP-binding</keyword>
<keyword id="KW-0093">Biotin biosynthesis</keyword>
<keyword id="KW-0436">Ligase</keyword>
<keyword id="KW-0460">Magnesium</keyword>
<keyword id="KW-0547">Nucleotide-binding</keyword>
<sequence>MFSLKMRASRNGNHVSGAERLVNEEKIEKISSELIKRAMSHENGVPDFINLKIEKVTEKINKLKHLEIKTVHSTSKENSRNIARNLLKNELEKYYLKNGKDIEKIDELIDFAFKIIDAGNMRGAAILDLDGNRLENILERGIRVKNIDTTEELSEKILKDSSLTKRTVDAIAIATKVVNCGVISELCTSDNFSYTTGYVATNDGYFRILNLKDKGQVGGRVFFVENSKIDELYDKLENMPVIVY</sequence>
<accession>A9A986</accession>
<proteinExistence type="inferred from homology"/>
<comment type="function">
    <text evidence="1">Catalyzes the transformation of pimelate into pimeloyl-CoA with concomitant hydrolysis of ATP to AMP.</text>
</comment>
<comment type="catalytic activity">
    <reaction evidence="1">
        <text>heptanedioate + ATP + CoA = 6-carboxyhexanoyl-CoA + AMP + diphosphate</text>
        <dbReference type="Rhea" id="RHEA:14781"/>
        <dbReference type="ChEBI" id="CHEBI:30616"/>
        <dbReference type="ChEBI" id="CHEBI:33019"/>
        <dbReference type="ChEBI" id="CHEBI:36165"/>
        <dbReference type="ChEBI" id="CHEBI:57287"/>
        <dbReference type="ChEBI" id="CHEBI:57360"/>
        <dbReference type="ChEBI" id="CHEBI:456215"/>
        <dbReference type="EC" id="6.2.1.14"/>
    </reaction>
</comment>
<comment type="cofactor">
    <cofactor evidence="1">
        <name>Mg(2+)</name>
        <dbReference type="ChEBI" id="CHEBI:18420"/>
    </cofactor>
</comment>
<comment type="pathway">
    <text evidence="1">Metabolic intermediate metabolism; pimeloyl-CoA biosynthesis; pimeloyl-CoA from pimelate: step 1/1.</text>
</comment>
<comment type="subunit">
    <text evidence="1">Homodimer.</text>
</comment>
<comment type="similarity">
    <text evidence="1">Belongs to the BioW family.</text>
</comment>
<name>BIOW_METM6</name>